<accession>Q40963</accession>
<keyword id="KW-0002">3D-structure</keyword>
<keyword id="KW-0020">Allergen</keyword>
<keyword id="KW-1015">Disulfide bond</keyword>
<keyword id="KW-0732">Signal</keyword>
<protein>
    <recommendedName>
        <fullName>Pollen allergen Phl p 5b</fullName>
    </recommendedName>
    <alternativeName>
        <fullName>Allergen Phl p Vb</fullName>
    </alternativeName>
    <allergenName>Phl p 5b</allergenName>
</protein>
<feature type="signal peptide" evidence="1">
    <location>
        <begin position="1" status="less than"/>
        <end position="19"/>
    </location>
</feature>
<feature type="chain" id="PRO_0000021746" description="Pollen allergen Phl p 5b">
    <location>
        <begin position="20"/>
        <end position="284"/>
    </location>
</feature>
<feature type="region of interest" description="Disordered" evidence="2">
    <location>
        <begin position="1"/>
        <end position="21"/>
    </location>
</feature>
<feature type="disulfide bond" description="Interchain" evidence="3">
    <location>
        <position position="205"/>
    </location>
</feature>
<feature type="non-terminal residue">
    <location>
        <position position="1"/>
    </location>
</feature>
<feature type="helix" evidence="5">
    <location>
        <begin position="152"/>
        <end position="155"/>
    </location>
</feature>
<feature type="helix" evidence="5">
    <location>
        <begin position="158"/>
        <end position="173"/>
    </location>
</feature>
<feature type="helix" evidence="5">
    <location>
        <begin position="177"/>
        <end position="179"/>
    </location>
</feature>
<feature type="helix" evidence="5">
    <location>
        <begin position="180"/>
        <end position="195"/>
    </location>
</feature>
<feature type="turn" evidence="5">
    <location>
        <begin position="196"/>
        <end position="198"/>
    </location>
</feature>
<feature type="helix" evidence="5">
    <location>
        <begin position="203"/>
        <end position="205"/>
    </location>
</feature>
<feature type="helix" evidence="5">
    <location>
        <begin position="207"/>
        <end position="218"/>
    </location>
</feature>
<feature type="turn" evidence="5">
    <location>
        <begin position="219"/>
        <end position="222"/>
    </location>
</feature>
<feature type="helix" evidence="5">
    <location>
        <begin position="225"/>
        <end position="227"/>
    </location>
</feature>
<feature type="helix" evidence="5">
    <location>
        <begin position="228"/>
        <end position="250"/>
    </location>
</feature>
<proteinExistence type="evidence at protein level"/>
<sequence length="284" mass="28002">AAAAVPRRGPRGGPGRSYTADAGYAPATPAAAGAAAGKATTEEQKLIEDINVGFKAAVAAAASVPAADKFKTFEAAFTSSSKAAAAKAPGLVPKLDAAYSVAYKAAVGATPEAKFDSFVASLTEALRVIAGALEVHAVKPVTEEPGMAKIPAGELQIIDKIDAAFKVAATAAATAPADDKFTVFEAAFNKAIKESTGGAYDTYKCIPSLEAAVKQAYAATVAAAPQVKYAVFEAALTKAITAMSEVQKVSQPATGAATVAAGAATTAAGAASGAATVAAGGYKV</sequence>
<reference key="1">
    <citation type="journal article" date="1995" name="FEBS Lett.">
        <title>Major allergen Phl p Vb in timothy grass is a novel pollen RNase.</title>
        <authorList>
            <person name="Bufe A."/>
            <person name="Schramm G."/>
            <person name="Keown M.B."/>
            <person name="Schlaak M."/>
            <person name="Becker W.M."/>
        </authorList>
    </citation>
    <scope>NUCLEOTIDE SEQUENCE [MRNA]</scope>
    <source>
        <strain>Agrostideae</strain>
        <tissue>Pollen</tissue>
    </source>
</reference>
<reference key="2">
    <citation type="submission" date="1997-09" db="EMBL/GenBank/DDBJ databases">
        <authorList>
            <person name="Bufe A."/>
        </authorList>
    </citation>
    <scope>SEQUENCE REVISION</scope>
</reference>
<reference key="3">
    <citation type="journal article" date="2002" name="Acta Crystallogr. D">
        <title>Structure of the functional domain of the major grass-pollen allergen Phlp 5b.</title>
        <authorList>
            <person name="Rajashankar K."/>
            <person name="Bufe A."/>
            <person name="Weber W."/>
            <person name="Eschenburg S."/>
            <person name="Lindner B."/>
            <person name="Betzel C."/>
        </authorList>
    </citation>
    <scope>X-RAY CRYSTALLOGRAPHY (1.98 ANGSTROMS) OF 150-251</scope>
    <scope>SUBUNIT</scope>
    <scope>DISULFIDE BOND</scope>
</reference>
<name>MPA5B_PHLPR</name>
<organism>
    <name type="scientific">Phleum pratense</name>
    <name type="common">Common timothy</name>
    <dbReference type="NCBI Taxonomy" id="15957"/>
    <lineage>
        <taxon>Eukaryota</taxon>
        <taxon>Viridiplantae</taxon>
        <taxon>Streptophyta</taxon>
        <taxon>Embryophyta</taxon>
        <taxon>Tracheophyta</taxon>
        <taxon>Spermatophyta</taxon>
        <taxon>Magnoliopsida</taxon>
        <taxon>Liliopsida</taxon>
        <taxon>Poales</taxon>
        <taxon>Poaceae</taxon>
        <taxon>BOP clade</taxon>
        <taxon>Pooideae</taxon>
        <taxon>Poodae</taxon>
        <taxon>Poeae</taxon>
        <taxon>Poeae Chloroplast Group 2 (Poeae type)</taxon>
        <taxon>Poodinae</taxon>
        <taxon>Phleinae</taxon>
        <taxon>Phleum</taxon>
    </lineage>
</organism>
<comment type="function">
    <text>Has ribonuclease activity. May be involved in host-pathogen interactions.</text>
</comment>
<comment type="subunit">
    <text evidence="3">Homodimer; disulfide-linked.</text>
</comment>
<comment type="allergen">
    <text>Causes an allergic reaction in human. Causes grass pollen allergy.</text>
</comment>
<comment type="similarity">
    <text evidence="4">Belongs to the Poa p IX/Phl p VI allergen family.</text>
</comment>
<dbReference type="EMBL" id="Z27083">
    <property type="protein sequence ID" value="CAA81609.1"/>
    <property type="molecule type" value="mRNA"/>
</dbReference>
<dbReference type="PDB" id="1L3P">
    <property type="method" value="X-ray"/>
    <property type="resolution" value="1.98 A"/>
    <property type="chains" value="A=150-251"/>
</dbReference>
<dbReference type="PDBsum" id="1L3P"/>
<dbReference type="SMR" id="Q40963"/>
<dbReference type="Allergome" id="558">
    <property type="allergen name" value="Phl p 5"/>
</dbReference>
<dbReference type="Allergome" id="567">
    <property type="allergen name" value="Phl p 5.0201"/>
</dbReference>
<dbReference type="EvolutionaryTrace" id="Q40963"/>
<dbReference type="GO" id="GO:0004540">
    <property type="term" value="F:RNA nuclease activity"/>
    <property type="evidence" value="ECO:0000314"/>
    <property type="project" value="CACAO"/>
</dbReference>
<dbReference type="CDD" id="cd12805">
    <property type="entry name" value="Allergen_V_VI"/>
    <property type="match status" value="1"/>
</dbReference>
<dbReference type="FunFam" id="1.20.120.320:FF:000001">
    <property type="entry name" value="Pollen allergen Phl p 5b"/>
    <property type="match status" value="1"/>
</dbReference>
<dbReference type="Gene3D" id="1.20.120.320">
    <property type="entry name" value="Group V grass pollen allergen"/>
    <property type="match status" value="2"/>
</dbReference>
<dbReference type="InterPro" id="IPR002914">
    <property type="entry name" value="Poa_pIX/Phl_pVI"/>
</dbReference>
<dbReference type="InterPro" id="IPR035506">
    <property type="entry name" value="Pollen_allergen/Os"/>
</dbReference>
<dbReference type="Pfam" id="PF01620">
    <property type="entry name" value="Pollen_allerg_2"/>
    <property type="match status" value="2"/>
</dbReference>
<dbReference type="PRINTS" id="PR00833">
    <property type="entry name" value="POAALLERGEN"/>
</dbReference>
<dbReference type="SUPFAM" id="SSF81736">
    <property type="entry name" value="Group V grass pollen allergen"/>
    <property type="match status" value="2"/>
</dbReference>
<evidence type="ECO:0000255" key="1"/>
<evidence type="ECO:0000256" key="2">
    <source>
        <dbReference type="SAM" id="MobiDB-lite"/>
    </source>
</evidence>
<evidence type="ECO:0000269" key="3">
    <source>
    </source>
</evidence>
<evidence type="ECO:0000305" key="4"/>
<evidence type="ECO:0007829" key="5">
    <source>
        <dbReference type="PDB" id="1L3P"/>
    </source>
</evidence>